<evidence type="ECO:0000255" key="1">
    <source>
        <dbReference type="HAMAP-Rule" id="MF_01313"/>
    </source>
</evidence>
<dbReference type="EC" id="1.18.1.-" evidence="1"/>
<dbReference type="EMBL" id="CP001127">
    <property type="protein sequence ID" value="ACF90629.1"/>
    <property type="molecule type" value="Genomic_DNA"/>
</dbReference>
<dbReference type="RefSeq" id="WP_000086343.1">
    <property type="nucleotide sequence ID" value="NC_011094.1"/>
</dbReference>
<dbReference type="SMR" id="B4TT18"/>
<dbReference type="KEGG" id="sew:SeSA_A2992"/>
<dbReference type="HOGENOM" id="CLU_003291_4_4_6"/>
<dbReference type="UniPathway" id="UPA00638"/>
<dbReference type="Proteomes" id="UP000001865">
    <property type="component" value="Chromosome"/>
</dbReference>
<dbReference type="GO" id="GO:0005737">
    <property type="term" value="C:cytoplasm"/>
    <property type="evidence" value="ECO:0007669"/>
    <property type="project" value="UniProtKB-SubCell"/>
</dbReference>
<dbReference type="GO" id="GO:0016731">
    <property type="term" value="F:oxidoreductase activity, acting on iron-sulfur proteins as donors, NAD or NADP as acceptor"/>
    <property type="evidence" value="ECO:0007669"/>
    <property type="project" value="UniProtKB-UniRule"/>
</dbReference>
<dbReference type="Gene3D" id="3.30.390.120">
    <property type="match status" value="1"/>
</dbReference>
<dbReference type="Gene3D" id="3.50.50.60">
    <property type="entry name" value="FAD/NAD(P)-binding domain"/>
    <property type="match status" value="2"/>
</dbReference>
<dbReference type="HAMAP" id="MF_01313">
    <property type="entry name" value="NorW"/>
    <property type="match status" value="1"/>
</dbReference>
<dbReference type="InterPro" id="IPR050260">
    <property type="entry name" value="FAD-bd_OxRdtase"/>
</dbReference>
<dbReference type="InterPro" id="IPR036188">
    <property type="entry name" value="FAD/NAD-bd_sf"/>
</dbReference>
<dbReference type="InterPro" id="IPR023753">
    <property type="entry name" value="FAD/NAD-binding_dom"/>
</dbReference>
<dbReference type="InterPro" id="IPR023961">
    <property type="entry name" value="NO_rdtase_NorW"/>
</dbReference>
<dbReference type="InterPro" id="IPR041364">
    <property type="entry name" value="Rbx-bd"/>
</dbReference>
<dbReference type="NCBIfam" id="NF003437">
    <property type="entry name" value="PRK04965.1"/>
    <property type="match status" value="1"/>
</dbReference>
<dbReference type="PANTHER" id="PTHR43429:SF3">
    <property type="entry name" value="NITRITE REDUCTASE [NAD(P)H]"/>
    <property type="match status" value="1"/>
</dbReference>
<dbReference type="PANTHER" id="PTHR43429">
    <property type="entry name" value="PYRIDINE NUCLEOTIDE-DISULFIDE OXIDOREDUCTASE DOMAIN-CONTAINING"/>
    <property type="match status" value="1"/>
</dbReference>
<dbReference type="Pfam" id="PF07992">
    <property type="entry name" value="Pyr_redox_2"/>
    <property type="match status" value="1"/>
</dbReference>
<dbReference type="Pfam" id="PF18113">
    <property type="entry name" value="Rbx_binding"/>
    <property type="match status" value="1"/>
</dbReference>
<dbReference type="PRINTS" id="PR00368">
    <property type="entry name" value="FADPNR"/>
</dbReference>
<dbReference type="PRINTS" id="PR00411">
    <property type="entry name" value="PNDRDTASEI"/>
</dbReference>
<dbReference type="SUPFAM" id="SSF51905">
    <property type="entry name" value="FAD/NAD(P)-binding domain"/>
    <property type="match status" value="1"/>
</dbReference>
<gene>
    <name evidence="1" type="primary">norW</name>
    <name evidence="1" type="synonym">flrR</name>
    <name type="ordered locus">SeSA_A2992</name>
</gene>
<comment type="function">
    <text evidence="1">One of at least two accessory proteins for anaerobic nitric oxide (NO) reductase. Reduces the rubredoxin moiety of NO reductase.</text>
</comment>
<comment type="catalytic activity">
    <reaction evidence="1">
        <text>2 reduced [nitric oxide reductase rubredoxin domain] + NAD(+) + H(+) = 2 oxidized [nitric oxide reductase rubredoxin domain] + NADH</text>
        <dbReference type="Rhea" id="RHEA:42960"/>
        <dbReference type="Rhea" id="RHEA-COMP:10304"/>
        <dbReference type="Rhea" id="RHEA-COMP:10305"/>
        <dbReference type="ChEBI" id="CHEBI:15378"/>
        <dbReference type="ChEBI" id="CHEBI:29033"/>
        <dbReference type="ChEBI" id="CHEBI:29034"/>
        <dbReference type="ChEBI" id="CHEBI:57540"/>
        <dbReference type="ChEBI" id="CHEBI:57945"/>
    </reaction>
</comment>
<comment type="cofactor">
    <cofactor evidence="1">
        <name>FAD</name>
        <dbReference type="ChEBI" id="CHEBI:57692"/>
    </cofactor>
</comment>
<comment type="pathway">
    <text evidence="1">Nitrogen metabolism; nitric oxide reduction.</text>
</comment>
<comment type="subcellular location">
    <subcellularLocation>
        <location evidence="1">Cytoplasm</location>
    </subcellularLocation>
</comment>
<comment type="similarity">
    <text evidence="1">Belongs to the FAD-dependent oxidoreductase family.</text>
</comment>
<proteinExistence type="inferred from homology"/>
<keyword id="KW-0963">Cytoplasm</keyword>
<keyword id="KW-0274">FAD</keyword>
<keyword id="KW-0285">Flavoprotein</keyword>
<keyword id="KW-0520">NAD</keyword>
<keyword id="KW-0560">Oxidoreductase</keyword>
<organism>
    <name type="scientific">Salmonella schwarzengrund (strain CVM19633)</name>
    <dbReference type="NCBI Taxonomy" id="439843"/>
    <lineage>
        <taxon>Bacteria</taxon>
        <taxon>Pseudomonadati</taxon>
        <taxon>Pseudomonadota</taxon>
        <taxon>Gammaproteobacteria</taxon>
        <taxon>Enterobacterales</taxon>
        <taxon>Enterobacteriaceae</taxon>
        <taxon>Salmonella</taxon>
    </lineage>
</organism>
<feature type="chain" id="PRO_1000141184" description="Nitric oxide reductase FlRd-NAD(+) reductase">
    <location>
        <begin position="1"/>
        <end position="377"/>
    </location>
</feature>
<name>NORW_SALSV</name>
<sequence length="377" mass="41215">MSRGIIIIGSGFAARQLVKNIRKQDAHVPLTLIAADSMDEYNKPDLSHVISQSQRADDLTRQLAGEFAEQFNLRLFPHTWVADIDADAHVVKSQDKQWQYDKLVLATGATAFVPPITGRELMLTLNSQQEYRACETQLRDAQRVMIVGGGLIGSELAMDFCRAGKTVTLMDNAASLLASLMPPEVSSRLQHHLTDMGVHLLLKSQLQKLEKTEAGIRATLVSQRNIEVDAVIAATGLRPETALARRAGVAVNRGVCVDSYLQTSHPDIYAIGDCAEINGQVLPFLQPIQLSAMYLAKNLLGGNAPLKLPAMLVKVKTPELPLHLAGETQRRDLSWQITAESDGMIAKGMSGEGQLRAFVVSEDRMKEAFALLKTLSV</sequence>
<reference key="1">
    <citation type="journal article" date="2011" name="J. Bacteriol.">
        <title>Comparative genomics of 28 Salmonella enterica isolates: evidence for CRISPR-mediated adaptive sublineage evolution.</title>
        <authorList>
            <person name="Fricke W.F."/>
            <person name="Mammel M.K."/>
            <person name="McDermott P.F."/>
            <person name="Tartera C."/>
            <person name="White D.G."/>
            <person name="Leclerc J.E."/>
            <person name="Ravel J."/>
            <person name="Cebula T.A."/>
        </authorList>
    </citation>
    <scope>NUCLEOTIDE SEQUENCE [LARGE SCALE GENOMIC DNA]</scope>
    <source>
        <strain>CVM19633</strain>
    </source>
</reference>
<protein>
    <recommendedName>
        <fullName evidence="1">Nitric oxide reductase FlRd-NAD(+) reductase</fullName>
        <ecNumber evidence="1">1.18.1.-</ecNumber>
    </recommendedName>
    <alternativeName>
        <fullName evidence="1">Flavorubredoxin reductase</fullName>
        <shortName evidence="1">FlRd-reductase</shortName>
        <shortName evidence="1">FlavoRb reductase</shortName>
    </alternativeName>
</protein>
<accession>B4TT18</accession>